<reference key="1">
    <citation type="journal article" date="2010" name="J. Bacteriol.">
        <title>The genome of the amoeba symbiont 'Candidatus Amoebophilus asiaticus' reveals common mechanisms for host cell interaction among amoeba-associated bacteria.</title>
        <authorList>
            <person name="Schmitz-Esser S."/>
            <person name="Tischler P."/>
            <person name="Arnold R."/>
            <person name="Montanaro J."/>
            <person name="Wagner M."/>
            <person name="Rattei T."/>
            <person name="Horn M."/>
        </authorList>
    </citation>
    <scope>NUCLEOTIDE SEQUENCE [LARGE SCALE GENOMIC DNA]</scope>
    <source>
        <strain>5a2</strain>
    </source>
</reference>
<organism>
    <name type="scientific">Amoebophilus asiaticus (strain 5a2)</name>
    <dbReference type="NCBI Taxonomy" id="452471"/>
    <lineage>
        <taxon>Bacteria</taxon>
        <taxon>Pseudomonadati</taxon>
        <taxon>Bacteroidota</taxon>
        <taxon>Cytophagia</taxon>
        <taxon>Cytophagales</taxon>
        <taxon>Amoebophilaceae</taxon>
        <taxon>Candidatus Amoebophilus</taxon>
    </lineage>
</organism>
<feature type="chain" id="PRO_1000191393" description="UDP-N-acetylenolpyruvoylglucosamine reductase">
    <location>
        <begin position="1"/>
        <end position="339"/>
    </location>
</feature>
<feature type="domain" description="FAD-binding PCMH-type" evidence="1">
    <location>
        <begin position="16"/>
        <end position="188"/>
    </location>
</feature>
<feature type="active site" evidence="1">
    <location>
        <position position="164"/>
    </location>
</feature>
<feature type="active site" description="Proton donor" evidence="1">
    <location>
        <position position="238"/>
    </location>
</feature>
<feature type="active site" evidence="1">
    <location>
        <position position="334"/>
    </location>
</feature>
<comment type="function">
    <text evidence="1">Cell wall formation.</text>
</comment>
<comment type="catalytic activity">
    <reaction evidence="1">
        <text>UDP-N-acetyl-alpha-D-muramate + NADP(+) = UDP-N-acetyl-3-O-(1-carboxyvinyl)-alpha-D-glucosamine + NADPH + H(+)</text>
        <dbReference type="Rhea" id="RHEA:12248"/>
        <dbReference type="ChEBI" id="CHEBI:15378"/>
        <dbReference type="ChEBI" id="CHEBI:57783"/>
        <dbReference type="ChEBI" id="CHEBI:58349"/>
        <dbReference type="ChEBI" id="CHEBI:68483"/>
        <dbReference type="ChEBI" id="CHEBI:70757"/>
        <dbReference type="EC" id="1.3.1.98"/>
    </reaction>
</comment>
<comment type="cofactor">
    <cofactor evidence="1">
        <name>FAD</name>
        <dbReference type="ChEBI" id="CHEBI:57692"/>
    </cofactor>
</comment>
<comment type="pathway">
    <text evidence="1">Cell wall biogenesis; peptidoglycan biosynthesis.</text>
</comment>
<comment type="subcellular location">
    <subcellularLocation>
        <location evidence="1">Cytoplasm</location>
    </subcellularLocation>
</comment>
<comment type="similarity">
    <text evidence="1">Belongs to the MurB family.</text>
</comment>
<name>MURB_AMOA5</name>
<proteinExistence type="inferred from homology"/>
<gene>
    <name evidence="1" type="primary">murB</name>
    <name type="ordered locus">Aasi_1339</name>
</gene>
<evidence type="ECO:0000255" key="1">
    <source>
        <dbReference type="HAMAP-Rule" id="MF_00037"/>
    </source>
</evidence>
<sequence>MDLQENIPLQSLNTFGIAATARYYSLVKSQAMLKQLLNNSSLHSLLKLTIGGGSNILFVKDFDGWVIHMDIKGIEKLGEDNNHIWLHVGAGVNWHSLVLYCIEKGYAGIENLSLIPGTVGAAPIQNIGAYGVEFSEVFESLEALEISTGLIKKFNKEACAFSYRDSIFKSSLKGQYIILQVTLRLNKQPTFQTNYGAIQEVLASMKPRTLSIKAISDAVIYIRQQKLPNPAYIGNAGSFFKNPIIDQAKATLLRNKYPNIPVHILANGYAKLPAAWLIEQSGWKGYRHDAVGVHLHQPLVIVNYGGATGKAVYKLAQAIQASVAENFSVMLEPEVNIIQ</sequence>
<accession>B3ETU4</accession>
<protein>
    <recommendedName>
        <fullName evidence="1">UDP-N-acetylenolpyruvoylglucosamine reductase</fullName>
        <ecNumber evidence="1">1.3.1.98</ecNumber>
    </recommendedName>
    <alternativeName>
        <fullName evidence="1">UDP-N-acetylmuramate dehydrogenase</fullName>
    </alternativeName>
</protein>
<dbReference type="EC" id="1.3.1.98" evidence="1"/>
<dbReference type="EMBL" id="CP001102">
    <property type="protein sequence ID" value="ACE06646.1"/>
    <property type="molecule type" value="Genomic_DNA"/>
</dbReference>
<dbReference type="RefSeq" id="WP_012473390.1">
    <property type="nucleotide sequence ID" value="NC_010830.1"/>
</dbReference>
<dbReference type="SMR" id="B3ETU4"/>
<dbReference type="STRING" id="452471.Aasi_1339"/>
<dbReference type="KEGG" id="aas:Aasi_1339"/>
<dbReference type="eggNOG" id="COG0812">
    <property type="taxonomic scope" value="Bacteria"/>
</dbReference>
<dbReference type="HOGENOM" id="CLU_035304_0_0_10"/>
<dbReference type="OrthoDB" id="9804753at2"/>
<dbReference type="UniPathway" id="UPA00219"/>
<dbReference type="Proteomes" id="UP000001227">
    <property type="component" value="Chromosome"/>
</dbReference>
<dbReference type="GO" id="GO:0005829">
    <property type="term" value="C:cytosol"/>
    <property type="evidence" value="ECO:0007669"/>
    <property type="project" value="TreeGrafter"/>
</dbReference>
<dbReference type="GO" id="GO:0071949">
    <property type="term" value="F:FAD binding"/>
    <property type="evidence" value="ECO:0007669"/>
    <property type="project" value="InterPro"/>
</dbReference>
<dbReference type="GO" id="GO:0008762">
    <property type="term" value="F:UDP-N-acetylmuramate dehydrogenase activity"/>
    <property type="evidence" value="ECO:0007669"/>
    <property type="project" value="UniProtKB-UniRule"/>
</dbReference>
<dbReference type="GO" id="GO:0051301">
    <property type="term" value="P:cell division"/>
    <property type="evidence" value="ECO:0007669"/>
    <property type="project" value="UniProtKB-KW"/>
</dbReference>
<dbReference type="GO" id="GO:0071555">
    <property type="term" value="P:cell wall organization"/>
    <property type="evidence" value="ECO:0007669"/>
    <property type="project" value="UniProtKB-KW"/>
</dbReference>
<dbReference type="GO" id="GO:0009252">
    <property type="term" value="P:peptidoglycan biosynthetic process"/>
    <property type="evidence" value="ECO:0007669"/>
    <property type="project" value="UniProtKB-UniRule"/>
</dbReference>
<dbReference type="GO" id="GO:0008360">
    <property type="term" value="P:regulation of cell shape"/>
    <property type="evidence" value="ECO:0007669"/>
    <property type="project" value="UniProtKB-KW"/>
</dbReference>
<dbReference type="Gene3D" id="3.30.465.10">
    <property type="match status" value="1"/>
</dbReference>
<dbReference type="Gene3D" id="3.90.78.10">
    <property type="entry name" value="UDP-N-acetylenolpyruvoylglucosamine reductase, C-terminal domain"/>
    <property type="match status" value="1"/>
</dbReference>
<dbReference type="Gene3D" id="3.30.43.10">
    <property type="entry name" value="Uridine Diphospho-n-acetylenolpyruvylglucosamine Reductase, domain 2"/>
    <property type="match status" value="1"/>
</dbReference>
<dbReference type="HAMAP" id="MF_00037">
    <property type="entry name" value="MurB"/>
    <property type="match status" value="1"/>
</dbReference>
<dbReference type="InterPro" id="IPR016166">
    <property type="entry name" value="FAD-bd_PCMH"/>
</dbReference>
<dbReference type="InterPro" id="IPR036318">
    <property type="entry name" value="FAD-bd_PCMH-like_sf"/>
</dbReference>
<dbReference type="InterPro" id="IPR016167">
    <property type="entry name" value="FAD-bd_PCMH_sub1"/>
</dbReference>
<dbReference type="InterPro" id="IPR016169">
    <property type="entry name" value="FAD-bd_PCMH_sub2"/>
</dbReference>
<dbReference type="InterPro" id="IPR003170">
    <property type="entry name" value="MurB"/>
</dbReference>
<dbReference type="InterPro" id="IPR011601">
    <property type="entry name" value="MurB_C"/>
</dbReference>
<dbReference type="InterPro" id="IPR036635">
    <property type="entry name" value="MurB_C_sf"/>
</dbReference>
<dbReference type="InterPro" id="IPR006094">
    <property type="entry name" value="Oxid_FAD_bind_N"/>
</dbReference>
<dbReference type="NCBIfam" id="TIGR00179">
    <property type="entry name" value="murB"/>
    <property type="match status" value="1"/>
</dbReference>
<dbReference type="NCBIfam" id="NF000755">
    <property type="entry name" value="PRK00046.1"/>
    <property type="match status" value="1"/>
</dbReference>
<dbReference type="PANTHER" id="PTHR21071">
    <property type="entry name" value="UDP-N-ACETYLENOLPYRUVOYLGLUCOSAMINE REDUCTASE"/>
    <property type="match status" value="1"/>
</dbReference>
<dbReference type="PANTHER" id="PTHR21071:SF4">
    <property type="entry name" value="UDP-N-ACETYLENOLPYRUVOYLGLUCOSAMINE REDUCTASE"/>
    <property type="match status" value="1"/>
</dbReference>
<dbReference type="Pfam" id="PF01565">
    <property type="entry name" value="FAD_binding_4"/>
    <property type="match status" value="1"/>
</dbReference>
<dbReference type="Pfam" id="PF02873">
    <property type="entry name" value="MurB_C"/>
    <property type="match status" value="1"/>
</dbReference>
<dbReference type="SUPFAM" id="SSF56176">
    <property type="entry name" value="FAD-binding/transporter-associated domain-like"/>
    <property type="match status" value="1"/>
</dbReference>
<dbReference type="SUPFAM" id="SSF56194">
    <property type="entry name" value="Uridine diphospho-N-Acetylenolpyruvylglucosamine reductase, MurB, C-terminal domain"/>
    <property type="match status" value="1"/>
</dbReference>
<dbReference type="PROSITE" id="PS51387">
    <property type="entry name" value="FAD_PCMH"/>
    <property type="match status" value="1"/>
</dbReference>
<keyword id="KW-0131">Cell cycle</keyword>
<keyword id="KW-0132">Cell division</keyword>
<keyword id="KW-0133">Cell shape</keyword>
<keyword id="KW-0961">Cell wall biogenesis/degradation</keyword>
<keyword id="KW-0963">Cytoplasm</keyword>
<keyword id="KW-0274">FAD</keyword>
<keyword id="KW-0285">Flavoprotein</keyword>
<keyword id="KW-0521">NADP</keyword>
<keyword id="KW-0560">Oxidoreductase</keyword>
<keyword id="KW-0573">Peptidoglycan synthesis</keyword>
<keyword id="KW-1185">Reference proteome</keyword>